<comment type="function">
    <text evidence="3 4 6">Protects DNA from oxidative damage by sequestering intracellular Fe(2+) ion and storing it in the form of Fe(3+) oxyhydroxide mineral. One hydrogen peroxide oxidizes two Fe(2+) ions, which prevents hydroxyl radical production by the Fenton reaction. Does not bind DNA.</text>
</comment>
<comment type="catalytic activity">
    <reaction>
        <text>2 Fe(2+) + H2O2 + 2 H(+) = 2 Fe(3+) + 2 H2O</text>
        <dbReference type="Rhea" id="RHEA:48712"/>
        <dbReference type="ChEBI" id="CHEBI:15377"/>
        <dbReference type="ChEBI" id="CHEBI:15378"/>
        <dbReference type="ChEBI" id="CHEBI:16240"/>
        <dbReference type="ChEBI" id="CHEBI:29033"/>
        <dbReference type="ChEBI" id="CHEBI:29034"/>
    </reaction>
</comment>
<comment type="subunit">
    <text evidence="2">Homododecamer. The 12 subunits form a hollow sphere into which the mineral iron core of up to 500 Fe(3+) can be deposited.</text>
</comment>
<comment type="subcellular location">
    <subcellularLocation>
        <location evidence="1">Cytoplasm</location>
    </subcellularLocation>
</comment>
<comment type="induction">
    <text evidence="3">By iron limitation and stationary growth phase.</text>
</comment>
<comment type="domain">
    <text>12 di-nuclear ferroxidase centers are located at the interfaces between subunits related by 2-fold symmetry axes.</text>
</comment>
<comment type="similarity">
    <text evidence="7">Belongs to the Dps family.</text>
</comment>
<sequence>MKTINSVDTKEFLNHQVANLNVFTVKIHQIHWYMRGHNFFTLHEKMDDLYSEFGEQMDEVAERLLAIGGSPFSTLKEFLENASVEEAPYTKPKTMDQLMEDLVGTLELLRDEYKQGIELTDKEGDDVTNDMLIAFKASIDKHIWMFKAFLGKAPLE</sequence>
<reference key="1">
    <citation type="journal article" date="1997" name="J. Biol. Chem.">
        <title>A novel non-heme iron-binding ferritin related to the DNA-binding proteins of the Dps family in Listeria innocua.</title>
        <authorList>
            <person name="Bozzi M."/>
            <person name="Mignogna G."/>
            <person name="Stefanini S."/>
            <person name="Barra D."/>
            <person name="Longhi C."/>
            <person name="Valenti P."/>
            <person name="Chiancone E."/>
        </authorList>
    </citation>
    <scope>PROTEIN SEQUENCE</scope>
    <scope>FUNCTION</scope>
</reference>
<reference key="2">
    <citation type="journal article" date="2002" name="Gene">
        <title>The expression of the dodecameric ferritin in Listeria spp. is induced by iron limitation and stationary growth phase.</title>
        <authorList>
            <person name="Polidoro M."/>
            <person name="De Biase D."/>
            <person name="Montagnini B."/>
            <person name="Guarrera L."/>
            <person name="Cavallo S."/>
            <person name="Valenti P."/>
            <person name="Stefanini S."/>
            <person name="Chiancone E."/>
        </authorList>
    </citation>
    <scope>NUCLEOTIDE SEQUENCE [GENOMIC DNA]</scope>
    <scope>FUNCTION</scope>
    <scope>INDUCTION</scope>
    <source>
        <strain>LS1</strain>
    </source>
</reference>
<reference key="3">
    <citation type="journal article" date="2001" name="Science">
        <title>Comparative genomics of Listeria species.</title>
        <authorList>
            <person name="Glaser P."/>
            <person name="Frangeul L."/>
            <person name="Buchrieser C."/>
            <person name="Rusniok C."/>
            <person name="Amend A."/>
            <person name="Baquero F."/>
            <person name="Berche P."/>
            <person name="Bloecker H."/>
            <person name="Brandt P."/>
            <person name="Chakraborty T."/>
            <person name="Charbit A."/>
            <person name="Chetouani F."/>
            <person name="Couve E."/>
            <person name="de Daruvar A."/>
            <person name="Dehoux P."/>
            <person name="Domann E."/>
            <person name="Dominguez-Bernal G."/>
            <person name="Duchaud E."/>
            <person name="Durant L."/>
            <person name="Dussurget O."/>
            <person name="Entian K.-D."/>
            <person name="Fsihi H."/>
            <person name="Garcia-del Portillo F."/>
            <person name="Garrido P."/>
            <person name="Gautier L."/>
            <person name="Goebel W."/>
            <person name="Gomez-Lopez N."/>
            <person name="Hain T."/>
            <person name="Hauf J."/>
            <person name="Jackson D."/>
            <person name="Jones L.-M."/>
            <person name="Kaerst U."/>
            <person name="Kreft J."/>
            <person name="Kuhn M."/>
            <person name="Kunst F."/>
            <person name="Kurapkat G."/>
            <person name="Madueno E."/>
            <person name="Maitournam A."/>
            <person name="Mata Vicente J."/>
            <person name="Ng E."/>
            <person name="Nedjari H."/>
            <person name="Nordsiek G."/>
            <person name="Novella S."/>
            <person name="de Pablos B."/>
            <person name="Perez-Diaz J.-C."/>
            <person name="Purcell R."/>
            <person name="Remmel B."/>
            <person name="Rose M."/>
            <person name="Schlueter T."/>
            <person name="Simoes N."/>
            <person name="Tierrez A."/>
            <person name="Vazquez-Boland J.-A."/>
            <person name="Voss H."/>
            <person name="Wehland J."/>
            <person name="Cossart P."/>
        </authorList>
    </citation>
    <scope>NUCLEOTIDE SEQUENCE [LARGE SCALE GENOMIC DNA]</scope>
    <source>
        <strain>ATCC BAA-680 / CLIP 11262</strain>
    </source>
</reference>
<reference key="4">
    <citation type="journal article" date="2005" name="Biochemistry">
        <title>The so-called Listeria innocua ferritin is a Dps protein. Iron incorporation, detoxification, and DNA protection properties.</title>
        <authorList>
            <person name="Su M."/>
            <person name="Cavallo S."/>
            <person name="Stefanini S."/>
            <person name="Chiancone E."/>
            <person name="Chasteen N.D."/>
        </authorList>
    </citation>
    <scope>FUNCTION IN DNA PROTECTION</scope>
    <scope>IRON INCORPORATION</scope>
</reference>
<reference key="5">
    <citation type="journal article" date="2000" name="Nat. Struct. Biol.">
        <title>The dodecameric ferritin from Listeria innocua contains a novel intersubunit iron-binding site.</title>
        <authorList>
            <person name="Ilari A."/>
            <person name="Stefanini S."/>
            <person name="Chiancone E."/>
            <person name="Tsernoglou D."/>
        </authorList>
    </citation>
    <scope>X-RAY CRYSTALLOGRAPHY (2.35 ANGSTROMS) IN COMPLEX WITH IRON</scope>
    <scope>SUBUNIT</scope>
</reference>
<reference key="6">
    <citation type="journal article" date="2005" name="Biochemistry">
        <title>The unusual intersubunit ferroxidase center of Listeria innocua Dps is required for hydrogen peroxide detoxification but not for iron uptake. A study with site-specific mutants.</title>
        <authorList>
            <person name="Ilari A."/>
            <person name="Latella M.C."/>
            <person name="Ceci P."/>
            <person name="Ribacchi F."/>
            <person name="Su M."/>
            <person name="Giangiacomo L."/>
            <person name="Stefanini S."/>
            <person name="Chasteen N.D."/>
            <person name="Chiancone E."/>
        </authorList>
    </citation>
    <scope>X-RAY CRYSTALLOGRAPHY (2.19 ANGSTROMS) OF MUTANTS GLY-31 AND GLY-43</scope>
    <scope>MUTAGENESIS OF HIS-31 AND HIS-43</scope>
</reference>
<feature type="chain" id="PRO_0000201657" description="DNA protection during starvation protein">
    <location>
        <begin position="1"/>
        <end position="156"/>
    </location>
</feature>
<feature type="binding site" evidence="2">
    <location>
        <position position="31"/>
    </location>
    <ligand>
        <name>Fe cation</name>
        <dbReference type="ChEBI" id="CHEBI:24875"/>
        <label>1</label>
        <note>ligand shared between two dodecameric partners</note>
    </ligand>
</feature>
<feature type="binding site" description="in other chain" evidence="2">
    <location>
        <position position="58"/>
    </location>
    <ligand>
        <name>Fe cation</name>
        <dbReference type="ChEBI" id="CHEBI:24875"/>
        <label>1</label>
        <note>ligand shared between two dodecameric partners</note>
    </ligand>
</feature>
<feature type="binding site" description="in other chain" evidence="2">
    <location>
        <position position="62"/>
    </location>
    <ligand>
        <name>Fe cation</name>
        <dbReference type="ChEBI" id="CHEBI:24875"/>
        <label>1</label>
        <note>ligand shared between two dodecameric partners</note>
    </ligand>
</feature>
<feature type="binding site" evidence="8">
    <location>
        <position position="62"/>
    </location>
    <ligand>
        <name>Fe cation</name>
        <dbReference type="ChEBI" id="CHEBI:24875"/>
        <label>2</label>
    </ligand>
</feature>
<feature type="mutagenesis site" description="Slight decrease in DNA protection and significant decrease in iron affinity. Retains only one third of wild-type DNA protection and loses iron binding ability; when associated with G-43." evidence="5">
    <original>H</original>
    <variation>G</variation>
    <location>
        <position position="31"/>
    </location>
</feature>
<feature type="mutagenesis site" description="Slight decrease in DNA protection and significant decrease iron affinity. Retains only one third of wild-type DNA protection and loses iron-binding ability; when associated with G-31." evidence="5">
    <original>H</original>
    <variation>G</variation>
    <location>
        <position position="43"/>
    </location>
</feature>
<feature type="sequence conflict" description="In Ref. 2." evidence="7" ref="2">
    <original>R</original>
    <variation>L</variation>
    <location>
        <position position="63"/>
    </location>
</feature>
<feature type="helix" evidence="9">
    <location>
        <begin position="3"/>
        <end position="5"/>
    </location>
</feature>
<feature type="helix" evidence="9">
    <location>
        <begin position="9"/>
        <end position="33"/>
    </location>
</feature>
<feature type="helix" evidence="9">
    <location>
        <begin position="39"/>
        <end position="66"/>
    </location>
</feature>
<feature type="helix" evidence="9">
    <location>
        <begin position="75"/>
        <end position="81"/>
    </location>
</feature>
<feature type="helix" evidence="9">
    <location>
        <begin position="95"/>
        <end position="123"/>
    </location>
</feature>
<feature type="helix" evidence="9">
    <location>
        <begin position="126"/>
        <end position="149"/>
    </location>
</feature>
<protein>
    <recommendedName>
        <fullName>DNA protection during starvation protein</fullName>
        <ecNumber>1.16.-.-</ecNumber>
    </recommendedName>
    <alternativeName>
        <fullName>Ferritin-like protein</fullName>
    </alternativeName>
    <alternativeName>
        <fullName>Non-heme iron-containing ferritin</fullName>
    </alternativeName>
</protein>
<organism>
    <name type="scientific">Listeria innocua serovar 6a (strain ATCC BAA-680 / CLIP 11262)</name>
    <dbReference type="NCBI Taxonomy" id="272626"/>
    <lineage>
        <taxon>Bacteria</taxon>
        <taxon>Bacillati</taxon>
        <taxon>Bacillota</taxon>
        <taxon>Bacilli</taxon>
        <taxon>Bacillales</taxon>
        <taxon>Listeriaceae</taxon>
        <taxon>Listeria</taxon>
    </lineage>
</organism>
<proteinExistence type="evidence at protein level"/>
<keyword id="KW-0002">3D-structure</keyword>
<keyword id="KW-0963">Cytoplasm</keyword>
<keyword id="KW-0903">Direct protein sequencing</keyword>
<keyword id="KW-0408">Iron</keyword>
<keyword id="KW-0409">Iron storage</keyword>
<keyword id="KW-0479">Metal-binding</keyword>
<keyword id="KW-0560">Oxidoreductase</keyword>
<name>DPS_LISIN</name>
<dbReference type="EC" id="1.16.-.-"/>
<dbReference type="EMBL" id="AJ244014">
    <property type="protein sequence ID" value="CAB65175.2"/>
    <property type="molecule type" value="Genomic_DNA"/>
</dbReference>
<dbReference type="EMBL" id="AL596167">
    <property type="protein sequence ID" value="CAC96173.1"/>
    <property type="molecule type" value="Genomic_DNA"/>
</dbReference>
<dbReference type="PIR" id="AE1550">
    <property type="entry name" value="AE1550"/>
</dbReference>
<dbReference type="RefSeq" id="WP_003761404.1">
    <property type="nucleotide sequence ID" value="NC_003212.1"/>
</dbReference>
<dbReference type="PDB" id="1QGH">
    <property type="method" value="X-ray"/>
    <property type="resolution" value="2.35 A"/>
    <property type="chains" value="A/B/C/D/E/F/G/H/I/J/K/L=1-156"/>
</dbReference>
<dbReference type="PDB" id="2BJY">
    <property type="method" value="X-ray"/>
    <property type="resolution" value="2.60 A"/>
    <property type="chains" value="A/B/C/D/E/F/G/H/I/J/K/L=1-156"/>
</dbReference>
<dbReference type="PDB" id="2BK6">
    <property type="method" value="X-ray"/>
    <property type="resolution" value="2.19 A"/>
    <property type="chains" value="A/B/C/D/E/F=1-156"/>
</dbReference>
<dbReference type="PDB" id="2BKC">
    <property type="method" value="X-ray"/>
    <property type="resolution" value="2.30 A"/>
    <property type="chains" value="A/B/C/D/E/F/G/H/I/J/K/L/M/N/O/P/Q/R/S/T/U/V/X/Y=1-156"/>
</dbReference>
<dbReference type="PDB" id="6HUI">
    <property type="method" value="X-ray"/>
    <property type="resolution" value="3.00 A"/>
    <property type="chains" value="A/B/C/D/E/F=1-156"/>
</dbReference>
<dbReference type="PDB" id="6HV1">
    <property type="method" value="X-ray"/>
    <property type="resolution" value="2.55 A"/>
    <property type="chains" value="A/B/C/D/E/F=1-156"/>
</dbReference>
<dbReference type="PDB" id="6HVQ">
    <property type="method" value="X-ray"/>
    <property type="resolution" value="1.90 A"/>
    <property type="chains" value="A/B/C/D/E/F=1-156"/>
</dbReference>
<dbReference type="PDB" id="6HX2">
    <property type="method" value="X-ray"/>
    <property type="resolution" value="1.60 A"/>
    <property type="chains" value="A/B/C/D/E/F=1-156"/>
</dbReference>
<dbReference type="PDB" id="6SEV">
    <property type="method" value="X-ray"/>
    <property type="resolution" value="2.00 A"/>
    <property type="chains" value="A/B/C/D/E/F=7-156"/>
</dbReference>
<dbReference type="PDBsum" id="1QGH"/>
<dbReference type="PDBsum" id="2BJY"/>
<dbReference type="PDBsum" id="2BK6"/>
<dbReference type="PDBsum" id="2BKC"/>
<dbReference type="PDBsum" id="6HUI"/>
<dbReference type="PDBsum" id="6HV1"/>
<dbReference type="PDBsum" id="6HVQ"/>
<dbReference type="PDBsum" id="6HX2"/>
<dbReference type="PDBsum" id="6SEV"/>
<dbReference type="SMR" id="P80725"/>
<dbReference type="STRING" id="272626.gene:17565272"/>
<dbReference type="GeneID" id="93234389"/>
<dbReference type="KEGG" id="lin:fri"/>
<dbReference type="eggNOG" id="COG0783">
    <property type="taxonomic scope" value="Bacteria"/>
</dbReference>
<dbReference type="HOGENOM" id="CLU_098183_4_0_9"/>
<dbReference type="OrthoDB" id="9797023at2"/>
<dbReference type="BRENDA" id="1.16.3.1">
    <property type="organism ID" value="3044"/>
</dbReference>
<dbReference type="EvolutionaryTrace" id="P80725"/>
<dbReference type="Proteomes" id="UP000002513">
    <property type="component" value="Chromosome"/>
</dbReference>
<dbReference type="GO" id="GO:0005737">
    <property type="term" value="C:cytoplasm"/>
    <property type="evidence" value="ECO:0007669"/>
    <property type="project" value="UniProtKB-SubCell"/>
</dbReference>
<dbReference type="GO" id="GO:0008199">
    <property type="term" value="F:ferric iron binding"/>
    <property type="evidence" value="ECO:0007669"/>
    <property type="project" value="InterPro"/>
</dbReference>
<dbReference type="GO" id="GO:0016722">
    <property type="term" value="F:oxidoreductase activity, acting on metal ions"/>
    <property type="evidence" value="ECO:0007669"/>
    <property type="project" value="InterPro"/>
</dbReference>
<dbReference type="GO" id="GO:0006879">
    <property type="term" value="P:intracellular iron ion homeostasis"/>
    <property type="evidence" value="ECO:0007669"/>
    <property type="project" value="UniProtKB-KW"/>
</dbReference>
<dbReference type="CDD" id="cd01043">
    <property type="entry name" value="DPS"/>
    <property type="match status" value="1"/>
</dbReference>
<dbReference type="Gene3D" id="1.20.1260.10">
    <property type="match status" value="1"/>
</dbReference>
<dbReference type="InterPro" id="IPR002177">
    <property type="entry name" value="DPS_DNA-bd"/>
</dbReference>
<dbReference type="InterPro" id="IPR023188">
    <property type="entry name" value="DPS_DNA-bd_CS"/>
</dbReference>
<dbReference type="InterPro" id="IPR012347">
    <property type="entry name" value="Ferritin-like"/>
</dbReference>
<dbReference type="InterPro" id="IPR009078">
    <property type="entry name" value="Ferritin-like_SF"/>
</dbReference>
<dbReference type="InterPro" id="IPR008331">
    <property type="entry name" value="Ferritin_DPS_dom"/>
</dbReference>
<dbReference type="PANTHER" id="PTHR42932">
    <property type="entry name" value="GENERAL STRESS PROTEIN 20U"/>
    <property type="match status" value="1"/>
</dbReference>
<dbReference type="PANTHER" id="PTHR42932:SF1">
    <property type="entry name" value="GENERAL STRESS PROTEIN 20U"/>
    <property type="match status" value="1"/>
</dbReference>
<dbReference type="Pfam" id="PF00210">
    <property type="entry name" value="Ferritin"/>
    <property type="match status" value="1"/>
</dbReference>
<dbReference type="PIRSF" id="PIRSF005900">
    <property type="entry name" value="Dps"/>
    <property type="match status" value="1"/>
</dbReference>
<dbReference type="PRINTS" id="PR01346">
    <property type="entry name" value="HELNAPAPROT"/>
</dbReference>
<dbReference type="SUPFAM" id="SSF47240">
    <property type="entry name" value="Ferritin-like"/>
    <property type="match status" value="1"/>
</dbReference>
<dbReference type="PROSITE" id="PS00818">
    <property type="entry name" value="DPS_1"/>
    <property type="match status" value="1"/>
</dbReference>
<dbReference type="PROSITE" id="PS00819">
    <property type="entry name" value="DPS_2"/>
    <property type="match status" value="1"/>
</dbReference>
<gene>
    <name type="primary">dps</name>
    <name type="synonym">flp</name>
    <name type="synonym">fri</name>
    <name type="ordered locus">lin0942</name>
</gene>
<evidence type="ECO:0000250" key="1"/>
<evidence type="ECO:0000269" key="2">
    <source>
    </source>
</evidence>
<evidence type="ECO:0000269" key="3">
    <source>
    </source>
</evidence>
<evidence type="ECO:0000269" key="4">
    <source>
    </source>
</evidence>
<evidence type="ECO:0000269" key="5">
    <source>
    </source>
</evidence>
<evidence type="ECO:0000269" key="6">
    <source>
    </source>
</evidence>
<evidence type="ECO:0000305" key="7"/>
<evidence type="ECO:0000305" key="8">
    <source>
    </source>
</evidence>
<evidence type="ECO:0007829" key="9">
    <source>
        <dbReference type="PDB" id="6HX2"/>
    </source>
</evidence>
<accession>P80725</accession>
<accession>Q9RE06</accession>